<feature type="chain" id="PRO_0000440277" description="Homoserine O-acetyltransferase">
    <location>
        <begin position="1"/>
        <end position="351"/>
    </location>
</feature>
<feature type="domain" description="AB hydrolase-1" evidence="1">
    <location>
        <begin position="51"/>
        <end position="334"/>
    </location>
</feature>
<feature type="active site" description="Nucleophile" evidence="1">
    <location>
        <position position="146"/>
    </location>
</feature>
<feature type="active site" evidence="1">
    <location>
        <position position="299"/>
    </location>
</feature>
<feature type="active site" evidence="1">
    <location>
        <position position="328"/>
    </location>
</feature>
<feature type="binding site" evidence="1">
    <location>
        <position position="212"/>
    </location>
    <ligand>
        <name>substrate</name>
    </ligand>
</feature>
<feature type="binding site" evidence="1">
    <location>
        <position position="329"/>
    </location>
    <ligand>
        <name>substrate</name>
    </ligand>
</feature>
<gene>
    <name evidence="1 3" type="primary">metXA</name>
    <name evidence="4" type="ordered locus">Cycma_4798</name>
</gene>
<evidence type="ECO:0000255" key="1">
    <source>
        <dbReference type="HAMAP-Rule" id="MF_00296"/>
    </source>
</evidence>
<evidence type="ECO:0000269" key="2">
    <source>
    </source>
</evidence>
<evidence type="ECO:0000303" key="3">
    <source>
    </source>
</evidence>
<evidence type="ECO:0000312" key="4">
    <source>
        <dbReference type="EMBL" id="AEL28483.1"/>
    </source>
</evidence>
<accession>G0J5N4</accession>
<organism>
    <name type="scientific">Cyclobacterium marinum (strain ATCC 25205 / DSM 745 / LMG 13164 / NCIMB 1802)</name>
    <name type="common">Flectobacillus marinus</name>
    <dbReference type="NCBI Taxonomy" id="880070"/>
    <lineage>
        <taxon>Bacteria</taxon>
        <taxon>Pseudomonadati</taxon>
        <taxon>Bacteroidota</taxon>
        <taxon>Cytophagia</taxon>
        <taxon>Cytophagales</taxon>
        <taxon>Cyclobacteriaceae</taxon>
        <taxon>Cyclobacterium</taxon>
    </lineage>
</organism>
<name>METXA_CYCMS</name>
<keyword id="KW-0012">Acyltransferase</keyword>
<keyword id="KW-0028">Amino-acid biosynthesis</keyword>
<keyword id="KW-0963">Cytoplasm</keyword>
<keyword id="KW-0486">Methionine biosynthesis</keyword>
<keyword id="KW-1185">Reference proteome</keyword>
<keyword id="KW-0808">Transferase</keyword>
<proteinExistence type="evidence at protein level"/>
<protein>
    <recommendedName>
        <fullName evidence="1">Homoserine O-acetyltransferase</fullName>
        <shortName evidence="1 3">HAT</shortName>
        <ecNumber evidence="1 2">2.3.1.31</ecNumber>
    </recommendedName>
    <alternativeName>
        <fullName evidence="1">Homoserine transacetylase</fullName>
        <shortName evidence="1">HTA</shortName>
    </alternativeName>
</protein>
<comment type="function">
    <text evidence="1 2">Transfers an acetyl group from acetyl-CoA to L-homoserine, forming acetyl-L-homoserine.</text>
</comment>
<comment type="catalytic activity">
    <reaction evidence="1 2">
        <text>L-homoserine + acetyl-CoA = O-acetyl-L-homoserine + CoA</text>
        <dbReference type="Rhea" id="RHEA:13701"/>
        <dbReference type="ChEBI" id="CHEBI:57287"/>
        <dbReference type="ChEBI" id="CHEBI:57288"/>
        <dbReference type="ChEBI" id="CHEBI:57476"/>
        <dbReference type="ChEBI" id="CHEBI:57716"/>
        <dbReference type="EC" id="2.3.1.31"/>
    </reaction>
</comment>
<comment type="pathway">
    <text evidence="1">Amino-acid biosynthesis; L-methionine biosynthesis via de novo pathway; O-acetyl-L-homoserine from L-homoserine: step 1/1.</text>
</comment>
<comment type="subunit">
    <text evidence="1">Homodimer.</text>
</comment>
<comment type="subcellular location">
    <subcellularLocation>
        <location evidence="1">Cytoplasm</location>
    </subcellularLocation>
</comment>
<comment type="similarity">
    <text evidence="1">Belongs to the AB hydrolase superfamily. MetX family.</text>
</comment>
<sequence length="351" mass="39422">MNLQSPHLTIEMTQEIFYCQEALSLESGESFPEFQLSFTTQGQLNANKDNVIWVLHALTGDANPHEWWSGLIGEDKFFDPSKYFIVCANFLGSCYGSTQPLSNNPNNGKPYYYDFPNITTRDIASALDKLRIHLGLEKINTVIGGSLGGQVGLEWAVSLGEKLENAIIVASNAKASPWIIGFNETQRMAIESDSTWGKTQPEAGKKGLETARAIGMLSYRHPMTFLQNQSETEEKRDDFKISSYLRYQGLKLANRFNAMSYWILSKAMDSHDIGRGRGGTPVALSNIKCKVLSIGVDTDILFTSEESRYISKHVPKGTYREISSIYGHDAFLIEYEQLQYILKSFYLENNG</sequence>
<dbReference type="EC" id="2.3.1.31" evidence="1 2"/>
<dbReference type="EMBL" id="CP002955">
    <property type="protein sequence ID" value="AEL28483.1"/>
    <property type="molecule type" value="Genomic_DNA"/>
</dbReference>
<dbReference type="RefSeq" id="WP_014022763.1">
    <property type="nucleotide sequence ID" value="NC_015914.1"/>
</dbReference>
<dbReference type="SMR" id="G0J5N4"/>
<dbReference type="STRING" id="880070.Cycma_4798"/>
<dbReference type="ESTHER" id="cycms-metxa">
    <property type="family name" value="Homoserine_transacetylase"/>
</dbReference>
<dbReference type="KEGG" id="cmr:Cycma_4798"/>
<dbReference type="eggNOG" id="COG2021">
    <property type="taxonomic scope" value="Bacteria"/>
</dbReference>
<dbReference type="HOGENOM" id="CLU_028760_1_2_10"/>
<dbReference type="OrthoDB" id="9800754at2"/>
<dbReference type="UniPathway" id="UPA00051">
    <property type="reaction ID" value="UER00074"/>
</dbReference>
<dbReference type="Proteomes" id="UP000001635">
    <property type="component" value="Chromosome"/>
</dbReference>
<dbReference type="GO" id="GO:0005737">
    <property type="term" value="C:cytoplasm"/>
    <property type="evidence" value="ECO:0007669"/>
    <property type="project" value="UniProtKB-SubCell"/>
</dbReference>
<dbReference type="GO" id="GO:0004414">
    <property type="term" value="F:homoserine O-acetyltransferase activity"/>
    <property type="evidence" value="ECO:0007669"/>
    <property type="project" value="UniProtKB-UniRule"/>
</dbReference>
<dbReference type="GO" id="GO:0009092">
    <property type="term" value="P:homoserine metabolic process"/>
    <property type="evidence" value="ECO:0007669"/>
    <property type="project" value="TreeGrafter"/>
</dbReference>
<dbReference type="GO" id="GO:0009086">
    <property type="term" value="P:methionine biosynthetic process"/>
    <property type="evidence" value="ECO:0007669"/>
    <property type="project" value="UniProtKB-UniRule"/>
</dbReference>
<dbReference type="Gene3D" id="3.40.50.1820">
    <property type="entry name" value="alpha/beta hydrolase"/>
    <property type="match status" value="1"/>
</dbReference>
<dbReference type="HAMAP" id="MF_00296">
    <property type="entry name" value="MetX_acyltransf"/>
    <property type="match status" value="1"/>
</dbReference>
<dbReference type="InterPro" id="IPR000073">
    <property type="entry name" value="AB_hydrolase_1"/>
</dbReference>
<dbReference type="InterPro" id="IPR029058">
    <property type="entry name" value="AB_hydrolase_fold"/>
</dbReference>
<dbReference type="InterPro" id="IPR008220">
    <property type="entry name" value="HAT_MetX-like"/>
</dbReference>
<dbReference type="NCBIfam" id="TIGR01392">
    <property type="entry name" value="homoserO_Ac_trn"/>
    <property type="match status" value="1"/>
</dbReference>
<dbReference type="PANTHER" id="PTHR32268">
    <property type="entry name" value="HOMOSERINE O-ACETYLTRANSFERASE"/>
    <property type="match status" value="1"/>
</dbReference>
<dbReference type="PANTHER" id="PTHR32268:SF11">
    <property type="entry name" value="HOMOSERINE O-ACETYLTRANSFERASE"/>
    <property type="match status" value="1"/>
</dbReference>
<dbReference type="Pfam" id="PF00561">
    <property type="entry name" value="Abhydrolase_1"/>
    <property type="match status" value="1"/>
</dbReference>
<dbReference type="PIRSF" id="PIRSF000443">
    <property type="entry name" value="Homoser_Ac_trans"/>
    <property type="match status" value="1"/>
</dbReference>
<dbReference type="SUPFAM" id="SSF53474">
    <property type="entry name" value="alpha/beta-Hydrolases"/>
    <property type="match status" value="1"/>
</dbReference>
<reference key="1">
    <citation type="submission" date="2011-07" db="EMBL/GenBank/DDBJ databases">
        <title>The complete genome of Cyclobacterium marinum DSM 745.</title>
        <authorList>
            <person name="Lucas S."/>
            <person name="Han J."/>
            <person name="Lapidus A."/>
            <person name="Bruce D."/>
            <person name="Goodwin L."/>
            <person name="Pitluck S."/>
            <person name="Peters L."/>
            <person name="Kyrpides N."/>
            <person name="Mavromatis K."/>
            <person name="Ivanova N."/>
            <person name="Ovchinnikova G."/>
            <person name="Chertkov O."/>
            <person name="Detter J.C."/>
            <person name="Tapia R."/>
            <person name="Han C."/>
            <person name="Land M."/>
            <person name="Hauser L."/>
            <person name="Markowitz V."/>
            <person name="Cheng J.-F."/>
            <person name="Hugenholtz P."/>
            <person name="Woyke T."/>
            <person name="Wu D."/>
            <person name="Tindall B."/>
            <person name="Schuetze A."/>
            <person name="Brambilla E."/>
            <person name="Klenk H.-P."/>
            <person name="Eisen J.A."/>
        </authorList>
    </citation>
    <scope>NUCLEOTIDE SEQUENCE [LARGE SCALE GENOMIC DNA]</scope>
    <source>
        <strain>ATCC 25205 / DSM 745 / LMG 13164 / NCIMB 1802</strain>
    </source>
</reference>
<reference key="2">
    <citation type="journal article" date="2017" name="Nat. Chem. Biol.">
        <title>Parallel evolution of non-homologous isofunctional enzymes in methionine biosynthesis.</title>
        <authorList>
            <person name="Bastard K."/>
            <person name="Perret A."/>
            <person name="Mariage A."/>
            <person name="Bessonnet T."/>
            <person name="Pinet-Turpault A."/>
            <person name="Petit J.L."/>
            <person name="Darii E."/>
            <person name="Bazire P."/>
            <person name="Vergne-Vaxelaire C."/>
            <person name="Brewee C."/>
            <person name="Debard A."/>
            <person name="Pellouin V."/>
            <person name="Besnard-Gonnet M."/>
            <person name="Artiguenave F."/>
            <person name="Medigue C."/>
            <person name="Vallenet D."/>
            <person name="Danchin A."/>
            <person name="Zaparucha A."/>
            <person name="Weissenbach J."/>
            <person name="Salanoubat M."/>
            <person name="de Berardinis V."/>
        </authorList>
    </citation>
    <scope>FUNCTION</scope>
    <scope>CATALYTIC ACTIVITY</scope>
</reference>